<feature type="chain" id="PRO_0000113574" description="Serine hydroxymethyltransferase">
    <location>
        <begin position="1"/>
        <end position="417"/>
    </location>
</feature>
<feature type="binding site" evidence="1">
    <location>
        <position position="121"/>
    </location>
    <ligand>
        <name>(6S)-5,6,7,8-tetrahydrofolate</name>
        <dbReference type="ChEBI" id="CHEBI:57453"/>
    </ligand>
</feature>
<feature type="binding site" evidence="1">
    <location>
        <begin position="125"/>
        <end position="127"/>
    </location>
    <ligand>
        <name>(6S)-5,6,7,8-tetrahydrofolate</name>
        <dbReference type="ChEBI" id="CHEBI:57453"/>
    </ligand>
</feature>
<feature type="binding site" evidence="1">
    <location>
        <begin position="355"/>
        <end position="357"/>
    </location>
    <ligand>
        <name>(6S)-5,6,7,8-tetrahydrofolate</name>
        <dbReference type="ChEBI" id="CHEBI:57453"/>
    </ligand>
</feature>
<feature type="site" description="Plays an important role in substrate specificity" evidence="1">
    <location>
        <position position="228"/>
    </location>
</feature>
<feature type="modified residue" description="N6-acetyllysine" evidence="1">
    <location>
        <position position="54"/>
    </location>
</feature>
<feature type="modified residue" description="N6-(pyridoxal phosphate)lysine" evidence="1">
    <location>
        <position position="229"/>
    </location>
</feature>
<feature type="modified residue" description="N6-acetyllysine" evidence="1">
    <location>
        <position position="250"/>
    </location>
</feature>
<feature type="modified residue" description="N6-acetyllysine" evidence="1">
    <location>
        <position position="285"/>
    </location>
</feature>
<feature type="modified residue" description="N6-acetyllysine" evidence="1">
    <location>
        <position position="354"/>
    </location>
</feature>
<feature type="modified residue" description="N6-acetyllysine" evidence="1">
    <location>
        <position position="375"/>
    </location>
</feature>
<sequence>MLKREMNIADYDAELWQAMEQEKVRQEEHIELIASENYTSPRVMQAQGSQLTNKYAEGYPGKRYYGGCEYVDIVEQLAIDRAKELFGADYANVQPHSGSQANFAVYTALLEPGDTVLGMNLAHGGHLTHGSPVNFSGKLYNIVPYGIDATGHIDYADLEKQAKEHKPKMIIGGFSAYSGVVDWAKMREIADSIGAYLFVDMAHVAGLVAAGVYPNPVPHAHVVTTTTHKTLAGPRGGLILAKGGSEELYKKLNSAVFPGGQGGPLMHVIAGKAVALKEAMEPEFKTYQQQVAKNAKAMVEVFLERGYKVVSGGTDNHLFLVDLVDKNLTGKEADAALGRANITVNKNSVPNDPKSPFVTSGIRVGTPAITRRGFKEAEAKELAGWMCDVLDSINDEAVIERIKGKVLDICARYPVYA</sequence>
<proteinExistence type="inferred from homology"/>
<protein>
    <recommendedName>
        <fullName evidence="1">Serine hydroxymethyltransferase</fullName>
        <shortName evidence="1">SHMT</shortName>
        <shortName evidence="1">Serine methylase</shortName>
        <ecNumber evidence="1">2.1.2.1</ecNumber>
    </recommendedName>
</protein>
<reference key="1">
    <citation type="journal article" date="2002" name="Proc. Natl. Acad. Sci. U.S.A.">
        <title>Extensive mosaic structure revealed by the complete genome sequence of uropathogenic Escherichia coli.</title>
        <authorList>
            <person name="Welch R.A."/>
            <person name="Burland V."/>
            <person name="Plunkett G. III"/>
            <person name="Redford P."/>
            <person name="Roesch P."/>
            <person name="Rasko D."/>
            <person name="Buckles E.L."/>
            <person name="Liou S.-R."/>
            <person name="Boutin A."/>
            <person name="Hackett J."/>
            <person name="Stroud D."/>
            <person name="Mayhew G.F."/>
            <person name="Rose D.J."/>
            <person name="Zhou S."/>
            <person name="Schwartz D.C."/>
            <person name="Perna N.T."/>
            <person name="Mobley H.L.T."/>
            <person name="Donnenberg M.S."/>
            <person name="Blattner F.R."/>
        </authorList>
    </citation>
    <scope>NUCLEOTIDE SEQUENCE [LARGE SCALE GENOMIC DNA]</scope>
    <source>
        <strain>CFT073 / ATCC 700928 / UPEC</strain>
    </source>
</reference>
<keyword id="KW-0007">Acetylation</keyword>
<keyword id="KW-0028">Amino-acid biosynthesis</keyword>
<keyword id="KW-0963">Cytoplasm</keyword>
<keyword id="KW-0554">One-carbon metabolism</keyword>
<keyword id="KW-0663">Pyridoxal phosphate</keyword>
<keyword id="KW-1185">Reference proteome</keyword>
<keyword id="KW-0808">Transferase</keyword>
<evidence type="ECO:0000255" key="1">
    <source>
        <dbReference type="HAMAP-Rule" id="MF_00051"/>
    </source>
</evidence>
<evidence type="ECO:0000305" key="2"/>
<gene>
    <name evidence="1" type="primary">glyA</name>
    <name type="ordered locus">c3073</name>
</gene>
<organism>
    <name type="scientific">Escherichia coli O6:H1 (strain CFT073 / ATCC 700928 / UPEC)</name>
    <dbReference type="NCBI Taxonomy" id="199310"/>
    <lineage>
        <taxon>Bacteria</taxon>
        <taxon>Pseudomonadati</taxon>
        <taxon>Pseudomonadota</taxon>
        <taxon>Gammaproteobacteria</taxon>
        <taxon>Enterobacterales</taxon>
        <taxon>Enterobacteriaceae</taxon>
        <taxon>Escherichia</taxon>
    </lineage>
</organism>
<name>GLYA_ECOL6</name>
<comment type="function">
    <text evidence="1">Catalyzes the reversible interconversion of serine and glycine with tetrahydrofolate (THF) serving as the one-carbon carrier. This reaction serves as the major source of one-carbon groups required for the biosynthesis of purines, thymidylate, methionine, and other important biomolecules. Also exhibits THF-independent aldolase activity toward beta-hydroxyamino acids, producing glycine and aldehydes, via a retro-aldol mechanism.</text>
</comment>
<comment type="catalytic activity">
    <reaction evidence="1">
        <text>(6R)-5,10-methylene-5,6,7,8-tetrahydrofolate + glycine + H2O = (6S)-5,6,7,8-tetrahydrofolate + L-serine</text>
        <dbReference type="Rhea" id="RHEA:15481"/>
        <dbReference type="ChEBI" id="CHEBI:15377"/>
        <dbReference type="ChEBI" id="CHEBI:15636"/>
        <dbReference type="ChEBI" id="CHEBI:33384"/>
        <dbReference type="ChEBI" id="CHEBI:57305"/>
        <dbReference type="ChEBI" id="CHEBI:57453"/>
        <dbReference type="EC" id="2.1.2.1"/>
    </reaction>
</comment>
<comment type="cofactor">
    <cofactor evidence="1">
        <name>pyridoxal 5'-phosphate</name>
        <dbReference type="ChEBI" id="CHEBI:597326"/>
    </cofactor>
</comment>
<comment type="pathway">
    <text evidence="1">One-carbon metabolism; tetrahydrofolate interconversion.</text>
</comment>
<comment type="pathway">
    <text evidence="1">Amino-acid biosynthesis; glycine biosynthesis; glycine from L-serine: step 1/1.</text>
</comment>
<comment type="subunit">
    <text evidence="1">Homodimer.</text>
</comment>
<comment type="subcellular location">
    <subcellularLocation>
        <location evidence="1">Cytoplasm</location>
    </subcellularLocation>
</comment>
<comment type="similarity">
    <text evidence="1">Belongs to the SHMT family.</text>
</comment>
<comment type="sequence caution" evidence="2">
    <conflict type="erroneous initiation">
        <sequence resource="EMBL-CDS" id="AAN81523"/>
    </conflict>
</comment>
<accession>P0A826</accession>
<accession>P00477</accession>
<dbReference type="EC" id="2.1.2.1" evidence="1"/>
<dbReference type="EMBL" id="AE014075">
    <property type="protein sequence ID" value="AAN81523.1"/>
    <property type="status" value="ALT_INIT"/>
    <property type="molecule type" value="Genomic_DNA"/>
</dbReference>
<dbReference type="RefSeq" id="WP_000919159.1">
    <property type="nucleotide sequence ID" value="NZ_CP051263.1"/>
</dbReference>
<dbReference type="SMR" id="P0A826"/>
<dbReference type="STRING" id="199310.c3073"/>
<dbReference type="GeneID" id="89517346"/>
<dbReference type="KEGG" id="ecc:c3073"/>
<dbReference type="eggNOG" id="COG0112">
    <property type="taxonomic scope" value="Bacteria"/>
</dbReference>
<dbReference type="HOGENOM" id="CLU_022477_2_1_6"/>
<dbReference type="UniPathway" id="UPA00193"/>
<dbReference type="UniPathway" id="UPA00288">
    <property type="reaction ID" value="UER01023"/>
</dbReference>
<dbReference type="Proteomes" id="UP000001410">
    <property type="component" value="Chromosome"/>
</dbReference>
<dbReference type="GO" id="GO:0005829">
    <property type="term" value="C:cytosol"/>
    <property type="evidence" value="ECO:0007669"/>
    <property type="project" value="TreeGrafter"/>
</dbReference>
<dbReference type="GO" id="GO:0004372">
    <property type="term" value="F:glycine hydroxymethyltransferase activity"/>
    <property type="evidence" value="ECO:0007669"/>
    <property type="project" value="UniProtKB-UniRule"/>
</dbReference>
<dbReference type="GO" id="GO:0030170">
    <property type="term" value="F:pyridoxal phosphate binding"/>
    <property type="evidence" value="ECO:0007669"/>
    <property type="project" value="UniProtKB-UniRule"/>
</dbReference>
<dbReference type="GO" id="GO:0019264">
    <property type="term" value="P:glycine biosynthetic process from serine"/>
    <property type="evidence" value="ECO:0007669"/>
    <property type="project" value="UniProtKB-UniRule"/>
</dbReference>
<dbReference type="GO" id="GO:0035999">
    <property type="term" value="P:tetrahydrofolate interconversion"/>
    <property type="evidence" value="ECO:0007669"/>
    <property type="project" value="UniProtKB-UniRule"/>
</dbReference>
<dbReference type="CDD" id="cd00378">
    <property type="entry name" value="SHMT"/>
    <property type="match status" value="1"/>
</dbReference>
<dbReference type="FunFam" id="3.40.640.10:FF:000001">
    <property type="entry name" value="Serine hydroxymethyltransferase"/>
    <property type="match status" value="1"/>
</dbReference>
<dbReference type="FunFam" id="3.90.1150.10:FF:000003">
    <property type="entry name" value="Serine hydroxymethyltransferase"/>
    <property type="match status" value="1"/>
</dbReference>
<dbReference type="Gene3D" id="3.90.1150.10">
    <property type="entry name" value="Aspartate Aminotransferase, domain 1"/>
    <property type="match status" value="1"/>
</dbReference>
<dbReference type="Gene3D" id="3.40.640.10">
    <property type="entry name" value="Type I PLP-dependent aspartate aminotransferase-like (Major domain)"/>
    <property type="match status" value="1"/>
</dbReference>
<dbReference type="HAMAP" id="MF_00051">
    <property type="entry name" value="SHMT"/>
    <property type="match status" value="1"/>
</dbReference>
<dbReference type="InterPro" id="IPR015424">
    <property type="entry name" value="PyrdxlP-dep_Trfase"/>
</dbReference>
<dbReference type="InterPro" id="IPR015421">
    <property type="entry name" value="PyrdxlP-dep_Trfase_major"/>
</dbReference>
<dbReference type="InterPro" id="IPR015422">
    <property type="entry name" value="PyrdxlP-dep_Trfase_small"/>
</dbReference>
<dbReference type="InterPro" id="IPR001085">
    <property type="entry name" value="Ser_HO-MeTrfase"/>
</dbReference>
<dbReference type="InterPro" id="IPR049943">
    <property type="entry name" value="Ser_HO-MeTrfase-like"/>
</dbReference>
<dbReference type="InterPro" id="IPR019798">
    <property type="entry name" value="Ser_HO-MeTrfase_PLP_BS"/>
</dbReference>
<dbReference type="InterPro" id="IPR039429">
    <property type="entry name" value="SHMT-like_dom"/>
</dbReference>
<dbReference type="NCBIfam" id="NF000586">
    <property type="entry name" value="PRK00011.1"/>
    <property type="match status" value="1"/>
</dbReference>
<dbReference type="PANTHER" id="PTHR11680">
    <property type="entry name" value="SERINE HYDROXYMETHYLTRANSFERASE"/>
    <property type="match status" value="1"/>
</dbReference>
<dbReference type="PANTHER" id="PTHR11680:SF50">
    <property type="entry name" value="SERINE HYDROXYMETHYLTRANSFERASE"/>
    <property type="match status" value="1"/>
</dbReference>
<dbReference type="Pfam" id="PF00464">
    <property type="entry name" value="SHMT"/>
    <property type="match status" value="1"/>
</dbReference>
<dbReference type="PIRSF" id="PIRSF000412">
    <property type="entry name" value="SHMT"/>
    <property type="match status" value="1"/>
</dbReference>
<dbReference type="SUPFAM" id="SSF53383">
    <property type="entry name" value="PLP-dependent transferases"/>
    <property type="match status" value="1"/>
</dbReference>
<dbReference type="PROSITE" id="PS00096">
    <property type="entry name" value="SHMT"/>
    <property type="match status" value="1"/>
</dbReference>